<evidence type="ECO:0000255" key="1">
    <source>
        <dbReference type="HAMAP-Rule" id="MF_00051"/>
    </source>
</evidence>
<accession>A7GGI2</accession>
<gene>
    <name evidence="1" type="primary">glyA</name>
    <name type="ordered locus">CLI_2658</name>
</gene>
<sequence length="413" mass="46424">MDFTNLKNTDPELLDMIKKEEERQEYNIELIASENFTSLSVMEAMGSLLTNKYAEGYPHKRYYGGCEFVDEVEDLARERLKKLFAAEHANVQPHSGSQANMAVYMSVLQTGDTILGMDLSHGGHLTHGSPVNFSGKLYNFISYGVDKETETIDYDQLKKIALENRPKMIVSGASAYPRIIDFEKIREICDEIDAYMMVDMAHIAGLVATGLHPSPVPYADFVTTTTHKTLRGPRGGAILCKEKYAKAVDKAIFPGIQGGPLMHTIAAKAVCFREALREDYKEYMQQVVKNTKVLGEELKNYGFRLISGGTDNHLLLIDLTNKNITGKDAEKLLDSVGITVNKNTIPFETLSPFITSGIRIGTPAVTTRGFKEEEMKKIAYFMNYSIEHREENLSQIKEQIKEICKKYPLYQNA</sequence>
<protein>
    <recommendedName>
        <fullName evidence="1">Serine hydroxymethyltransferase</fullName>
        <shortName evidence="1">SHMT</shortName>
        <shortName evidence="1">Serine methylase</shortName>
        <ecNumber evidence="1">2.1.2.1</ecNumber>
    </recommendedName>
</protein>
<comment type="function">
    <text evidence="1">Catalyzes the reversible interconversion of serine and glycine with tetrahydrofolate (THF) serving as the one-carbon carrier. This reaction serves as the major source of one-carbon groups required for the biosynthesis of purines, thymidylate, methionine, and other important biomolecules. Also exhibits THF-independent aldolase activity toward beta-hydroxyamino acids, producing glycine and aldehydes, via a retro-aldol mechanism.</text>
</comment>
<comment type="catalytic activity">
    <reaction evidence="1">
        <text>(6R)-5,10-methylene-5,6,7,8-tetrahydrofolate + glycine + H2O = (6S)-5,6,7,8-tetrahydrofolate + L-serine</text>
        <dbReference type="Rhea" id="RHEA:15481"/>
        <dbReference type="ChEBI" id="CHEBI:15377"/>
        <dbReference type="ChEBI" id="CHEBI:15636"/>
        <dbReference type="ChEBI" id="CHEBI:33384"/>
        <dbReference type="ChEBI" id="CHEBI:57305"/>
        <dbReference type="ChEBI" id="CHEBI:57453"/>
        <dbReference type="EC" id="2.1.2.1"/>
    </reaction>
</comment>
<comment type="cofactor">
    <cofactor evidence="1">
        <name>pyridoxal 5'-phosphate</name>
        <dbReference type="ChEBI" id="CHEBI:597326"/>
    </cofactor>
</comment>
<comment type="pathway">
    <text evidence="1">One-carbon metabolism; tetrahydrofolate interconversion.</text>
</comment>
<comment type="pathway">
    <text evidence="1">Amino-acid biosynthesis; glycine biosynthesis; glycine from L-serine: step 1/1.</text>
</comment>
<comment type="subunit">
    <text evidence="1">Homodimer.</text>
</comment>
<comment type="subcellular location">
    <subcellularLocation>
        <location evidence="1">Cytoplasm</location>
    </subcellularLocation>
</comment>
<comment type="similarity">
    <text evidence="1">Belongs to the SHMT family.</text>
</comment>
<proteinExistence type="inferred from homology"/>
<organism>
    <name type="scientific">Clostridium botulinum (strain Langeland / NCTC 10281 / Type F)</name>
    <dbReference type="NCBI Taxonomy" id="441772"/>
    <lineage>
        <taxon>Bacteria</taxon>
        <taxon>Bacillati</taxon>
        <taxon>Bacillota</taxon>
        <taxon>Clostridia</taxon>
        <taxon>Eubacteriales</taxon>
        <taxon>Clostridiaceae</taxon>
        <taxon>Clostridium</taxon>
    </lineage>
</organism>
<name>GLYA_CLOBL</name>
<dbReference type="EC" id="2.1.2.1" evidence="1"/>
<dbReference type="EMBL" id="CP000728">
    <property type="protein sequence ID" value="ABS41035.1"/>
    <property type="molecule type" value="Genomic_DNA"/>
</dbReference>
<dbReference type="RefSeq" id="WP_012100478.1">
    <property type="nucleotide sequence ID" value="NC_009699.1"/>
</dbReference>
<dbReference type="SMR" id="A7GGI2"/>
<dbReference type="KEGG" id="cbf:CLI_2658"/>
<dbReference type="HOGENOM" id="CLU_022477_2_1_9"/>
<dbReference type="UniPathway" id="UPA00193"/>
<dbReference type="UniPathway" id="UPA00288">
    <property type="reaction ID" value="UER01023"/>
</dbReference>
<dbReference type="Proteomes" id="UP000002410">
    <property type="component" value="Chromosome"/>
</dbReference>
<dbReference type="GO" id="GO:0005829">
    <property type="term" value="C:cytosol"/>
    <property type="evidence" value="ECO:0007669"/>
    <property type="project" value="TreeGrafter"/>
</dbReference>
<dbReference type="GO" id="GO:0004372">
    <property type="term" value="F:glycine hydroxymethyltransferase activity"/>
    <property type="evidence" value="ECO:0007669"/>
    <property type="project" value="UniProtKB-UniRule"/>
</dbReference>
<dbReference type="GO" id="GO:0030170">
    <property type="term" value="F:pyridoxal phosphate binding"/>
    <property type="evidence" value="ECO:0007669"/>
    <property type="project" value="UniProtKB-UniRule"/>
</dbReference>
<dbReference type="GO" id="GO:0019264">
    <property type="term" value="P:glycine biosynthetic process from serine"/>
    <property type="evidence" value="ECO:0007669"/>
    <property type="project" value="UniProtKB-UniRule"/>
</dbReference>
<dbReference type="GO" id="GO:0035999">
    <property type="term" value="P:tetrahydrofolate interconversion"/>
    <property type="evidence" value="ECO:0007669"/>
    <property type="project" value="UniProtKB-UniRule"/>
</dbReference>
<dbReference type="CDD" id="cd00378">
    <property type="entry name" value="SHMT"/>
    <property type="match status" value="1"/>
</dbReference>
<dbReference type="FunFam" id="3.40.640.10:FF:000001">
    <property type="entry name" value="Serine hydroxymethyltransferase"/>
    <property type="match status" value="1"/>
</dbReference>
<dbReference type="FunFam" id="3.90.1150.10:FF:000003">
    <property type="entry name" value="Serine hydroxymethyltransferase"/>
    <property type="match status" value="1"/>
</dbReference>
<dbReference type="Gene3D" id="3.90.1150.10">
    <property type="entry name" value="Aspartate Aminotransferase, domain 1"/>
    <property type="match status" value="1"/>
</dbReference>
<dbReference type="Gene3D" id="3.40.640.10">
    <property type="entry name" value="Type I PLP-dependent aspartate aminotransferase-like (Major domain)"/>
    <property type="match status" value="1"/>
</dbReference>
<dbReference type="HAMAP" id="MF_00051">
    <property type="entry name" value="SHMT"/>
    <property type="match status" value="1"/>
</dbReference>
<dbReference type="InterPro" id="IPR015424">
    <property type="entry name" value="PyrdxlP-dep_Trfase"/>
</dbReference>
<dbReference type="InterPro" id="IPR015421">
    <property type="entry name" value="PyrdxlP-dep_Trfase_major"/>
</dbReference>
<dbReference type="InterPro" id="IPR015422">
    <property type="entry name" value="PyrdxlP-dep_Trfase_small"/>
</dbReference>
<dbReference type="InterPro" id="IPR001085">
    <property type="entry name" value="Ser_HO-MeTrfase"/>
</dbReference>
<dbReference type="InterPro" id="IPR049943">
    <property type="entry name" value="Ser_HO-MeTrfase-like"/>
</dbReference>
<dbReference type="InterPro" id="IPR019798">
    <property type="entry name" value="Ser_HO-MeTrfase_PLP_BS"/>
</dbReference>
<dbReference type="InterPro" id="IPR039429">
    <property type="entry name" value="SHMT-like_dom"/>
</dbReference>
<dbReference type="NCBIfam" id="NF000586">
    <property type="entry name" value="PRK00011.1"/>
    <property type="match status" value="1"/>
</dbReference>
<dbReference type="PANTHER" id="PTHR11680">
    <property type="entry name" value="SERINE HYDROXYMETHYLTRANSFERASE"/>
    <property type="match status" value="1"/>
</dbReference>
<dbReference type="PANTHER" id="PTHR11680:SF35">
    <property type="entry name" value="SERINE HYDROXYMETHYLTRANSFERASE 1"/>
    <property type="match status" value="1"/>
</dbReference>
<dbReference type="Pfam" id="PF00464">
    <property type="entry name" value="SHMT"/>
    <property type="match status" value="1"/>
</dbReference>
<dbReference type="PIRSF" id="PIRSF000412">
    <property type="entry name" value="SHMT"/>
    <property type="match status" value="1"/>
</dbReference>
<dbReference type="SUPFAM" id="SSF53383">
    <property type="entry name" value="PLP-dependent transferases"/>
    <property type="match status" value="1"/>
</dbReference>
<dbReference type="PROSITE" id="PS00096">
    <property type="entry name" value="SHMT"/>
    <property type="match status" value="1"/>
</dbReference>
<reference key="1">
    <citation type="submission" date="2007-06" db="EMBL/GenBank/DDBJ databases">
        <authorList>
            <person name="Brinkac L.M."/>
            <person name="Daugherty S."/>
            <person name="Dodson R.J."/>
            <person name="Madupu R."/>
            <person name="Brown J.L."/>
            <person name="Bruce D."/>
            <person name="Detter C."/>
            <person name="Munk C."/>
            <person name="Smith L.A."/>
            <person name="Smith T.J."/>
            <person name="White O."/>
            <person name="Brettin T.S."/>
        </authorList>
    </citation>
    <scope>NUCLEOTIDE SEQUENCE [LARGE SCALE GENOMIC DNA]</scope>
    <source>
        <strain>Langeland / NCTC 10281 / Type F</strain>
    </source>
</reference>
<keyword id="KW-0028">Amino-acid biosynthesis</keyword>
<keyword id="KW-0963">Cytoplasm</keyword>
<keyword id="KW-0554">One-carbon metabolism</keyword>
<keyword id="KW-0663">Pyridoxal phosphate</keyword>
<keyword id="KW-0808">Transferase</keyword>
<feature type="chain" id="PRO_1000006238" description="Serine hydroxymethyltransferase">
    <location>
        <begin position="1"/>
        <end position="413"/>
    </location>
</feature>
<feature type="binding site" evidence="1">
    <location>
        <position position="119"/>
    </location>
    <ligand>
        <name>(6S)-5,6,7,8-tetrahydrofolate</name>
        <dbReference type="ChEBI" id="CHEBI:57453"/>
    </ligand>
</feature>
<feature type="binding site" evidence="1">
    <location>
        <begin position="123"/>
        <end position="125"/>
    </location>
    <ligand>
        <name>(6S)-5,6,7,8-tetrahydrofolate</name>
        <dbReference type="ChEBI" id="CHEBI:57453"/>
    </ligand>
</feature>
<feature type="binding site" evidence="1">
    <location>
        <begin position="351"/>
        <end position="353"/>
    </location>
    <ligand>
        <name>(6S)-5,6,7,8-tetrahydrofolate</name>
        <dbReference type="ChEBI" id="CHEBI:57453"/>
    </ligand>
</feature>
<feature type="site" description="Plays an important role in substrate specificity" evidence="1">
    <location>
        <position position="227"/>
    </location>
</feature>
<feature type="modified residue" description="N6-(pyridoxal phosphate)lysine" evidence="1">
    <location>
        <position position="228"/>
    </location>
</feature>